<gene>
    <name type="primary">MT-ND4L</name>
    <name type="synonym">MTND4L</name>
    <name type="synonym">NADH4L</name>
    <name type="synonym">ND4L</name>
</gene>
<dbReference type="EC" id="7.1.1.2"/>
<dbReference type="EMBL" id="AY377239">
    <property type="protein sequence ID" value="AAQ93778.1"/>
    <property type="molecule type" value="Genomic_DNA"/>
</dbReference>
<dbReference type="EMBL" id="AM181031">
    <property type="protein sequence ID" value="CAJ57074.1"/>
    <property type="molecule type" value="Genomic_DNA"/>
</dbReference>
<dbReference type="EMBL" id="AB244723">
    <property type="protein sequence ID" value="BAE54438.1"/>
    <property type="molecule type" value="Genomic_DNA"/>
</dbReference>
<dbReference type="EMBL" id="AB244724">
    <property type="protein sequence ID" value="BAE54439.1"/>
    <property type="molecule type" value="Genomic_DNA"/>
</dbReference>
<dbReference type="EMBL" id="AB244728">
    <property type="protein sequence ID" value="BAE54443.1"/>
    <property type="molecule type" value="Genomic_DNA"/>
</dbReference>
<dbReference type="EMBL" id="AB244729">
    <property type="protein sequence ID" value="BAE54446.1"/>
    <property type="molecule type" value="Genomic_DNA"/>
</dbReference>
<dbReference type="RefSeq" id="YP_778885.1">
    <property type="nucleotide sequence ID" value="NC_008430.1"/>
</dbReference>
<dbReference type="SMR" id="Q679A5"/>
<dbReference type="GeneID" id="4356268"/>
<dbReference type="CTD" id="4539"/>
<dbReference type="GO" id="GO:0005743">
    <property type="term" value="C:mitochondrial inner membrane"/>
    <property type="evidence" value="ECO:0000250"/>
    <property type="project" value="UniProtKB"/>
</dbReference>
<dbReference type="GO" id="GO:0045271">
    <property type="term" value="C:respiratory chain complex I"/>
    <property type="evidence" value="ECO:0000250"/>
    <property type="project" value="UniProtKB"/>
</dbReference>
<dbReference type="GO" id="GO:0008137">
    <property type="term" value="F:NADH dehydrogenase (ubiquinone) activity"/>
    <property type="evidence" value="ECO:0000250"/>
    <property type="project" value="UniProtKB"/>
</dbReference>
<dbReference type="GO" id="GO:0042773">
    <property type="term" value="P:ATP synthesis coupled electron transport"/>
    <property type="evidence" value="ECO:0007669"/>
    <property type="project" value="InterPro"/>
</dbReference>
<dbReference type="FunFam" id="1.10.287.3510:FF:000002">
    <property type="entry name" value="NADH-ubiquinone oxidoreductase chain 4L"/>
    <property type="match status" value="1"/>
</dbReference>
<dbReference type="Gene3D" id="1.10.287.3510">
    <property type="match status" value="1"/>
</dbReference>
<dbReference type="InterPro" id="IPR001133">
    <property type="entry name" value="NADH_UbQ_OxRdtase_chain4L/K"/>
</dbReference>
<dbReference type="InterPro" id="IPR039428">
    <property type="entry name" value="NUOK/Mnh_C1-like"/>
</dbReference>
<dbReference type="PANTHER" id="PTHR11434:SF0">
    <property type="entry name" value="NADH-UBIQUINONE OXIDOREDUCTASE CHAIN 4L"/>
    <property type="match status" value="1"/>
</dbReference>
<dbReference type="PANTHER" id="PTHR11434">
    <property type="entry name" value="NADH-UBIQUINONE OXIDOREDUCTASE SUBUNIT ND4L"/>
    <property type="match status" value="1"/>
</dbReference>
<dbReference type="Pfam" id="PF00420">
    <property type="entry name" value="Oxidored_q2"/>
    <property type="match status" value="1"/>
</dbReference>
<comment type="function">
    <text evidence="1">Core subunit of the mitochondrial membrane respiratory chain NADH dehydrogenase (Complex I) which catalyzes electron transfer from NADH through the respiratory chain, using ubiquinone as an electron acceptor. Part of the enzyme membrane arm which is embedded in the lipid bilayer and involved in proton translocation.</text>
</comment>
<comment type="catalytic activity">
    <reaction evidence="1">
        <text>a ubiquinone + NADH + 5 H(+)(in) = a ubiquinol + NAD(+) + 4 H(+)(out)</text>
        <dbReference type="Rhea" id="RHEA:29091"/>
        <dbReference type="Rhea" id="RHEA-COMP:9565"/>
        <dbReference type="Rhea" id="RHEA-COMP:9566"/>
        <dbReference type="ChEBI" id="CHEBI:15378"/>
        <dbReference type="ChEBI" id="CHEBI:16389"/>
        <dbReference type="ChEBI" id="CHEBI:17976"/>
        <dbReference type="ChEBI" id="CHEBI:57540"/>
        <dbReference type="ChEBI" id="CHEBI:57945"/>
        <dbReference type="EC" id="7.1.1.2"/>
    </reaction>
    <physiologicalReaction direction="left-to-right" evidence="1">
        <dbReference type="Rhea" id="RHEA:29092"/>
    </physiologicalReaction>
</comment>
<comment type="subunit">
    <text evidence="2">Core subunit of respiratory chain NADH dehydrogenase (Complex I) which is composed of 45 different subunits.</text>
</comment>
<comment type="subcellular location">
    <subcellularLocation>
        <location evidence="2">Mitochondrion inner membrane</location>
        <topology evidence="3">Multi-pass membrane protein</topology>
    </subcellularLocation>
</comment>
<comment type="similarity">
    <text evidence="4">Belongs to the complex I subunit 4L family.</text>
</comment>
<geneLocation type="mitochondrion"/>
<evidence type="ECO:0000250" key="1">
    <source>
        <dbReference type="UniProtKB" id="P03901"/>
    </source>
</evidence>
<evidence type="ECO:0000250" key="2">
    <source>
        <dbReference type="UniProtKB" id="P03902"/>
    </source>
</evidence>
<evidence type="ECO:0000255" key="3"/>
<evidence type="ECO:0000305" key="4"/>
<organism>
    <name type="scientific">Phoca largha</name>
    <name type="common">Spotted seal</name>
    <dbReference type="NCBI Taxonomy" id="39090"/>
    <lineage>
        <taxon>Eukaryota</taxon>
        <taxon>Metazoa</taxon>
        <taxon>Chordata</taxon>
        <taxon>Craniata</taxon>
        <taxon>Vertebrata</taxon>
        <taxon>Euteleostomi</taxon>
        <taxon>Mammalia</taxon>
        <taxon>Eutheria</taxon>
        <taxon>Laurasiatheria</taxon>
        <taxon>Carnivora</taxon>
        <taxon>Caniformia</taxon>
        <taxon>Pinnipedia</taxon>
        <taxon>Phocidae</taxon>
        <taxon>Phocinae</taxon>
        <taxon>Phoca</taxon>
    </lineage>
</organism>
<protein>
    <recommendedName>
        <fullName>NADH-ubiquinone oxidoreductase chain 4L</fullName>
        <ecNumber>7.1.1.2</ecNumber>
    </recommendedName>
    <alternativeName>
        <fullName>NADH dehydrogenase subunit 4L</fullName>
    </alternativeName>
</protein>
<feature type="chain" id="PRO_0000275096" description="NADH-ubiquinone oxidoreductase chain 4L">
    <location>
        <begin position="1"/>
        <end position="98"/>
    </location>
</feature>
<feature type="transmembrane region" description="Helical" evidence="3">
    <location>
        <begin position="1"/>
        <end position="21"/>
    </location>
</feature>
<feature type="transmembrane region" description="Helical" evidence="3">
    <location>
        <begin position="29"/>
        <end position="49"/>
    </location>
</feature>
<feature type="transmembrane region" description="Helical" evidence="3">
    <location>
        <begin position="61"/>
        <end position="81"/>
    </location>
</feature>
<sequence length="98" mass="10854">MSMVYANIFLAFIMSLMGLLMYRSHLMSSLLCLEGMMLSLFVMMTVTILNNHFTLASMAPIILLVFAACEAALGLSLLVMVSNTYGTDYVQNLNLLQC</sequence>
<accession>Q679A5</accession>
<name>NU4LM_PHOLR</name>
<keyword id="KW-0249">Electron transport</keyword>
<keyword id="KW-0472">Membrane</keyword>
<keyword id="KW-0496">Mitochondrion</keyword>
<keyword id="KW-0999">Mitochondrion inner membrane</keyword>
<keyword id="KW-0520">NAD</keyword>
<keyword id="KW-0679">Respiratory chain</keyword>
<keyword id="KW-1278">Translocase</keyword>
<keyword id="KW-0812">Transmembrane</keyword>
<keyword id="KW-1133">Transmembrane helix</keyword>
<keyword id="KW-0813">Transport</keyword>
<keyword id="KW-0830">Ubiquinone</keyword>
<proteinExistence type="inferred from homology"/>
<reference key="1">
    <citation type="journal article" date="2004" name="Mol. Phylogenet. Evol.">
        <title>A phylogeny of the extant Phocidae inferred from complete mitochondrial DNA coding regions.</title>
        <authorList>
            <person name="Davis C.S."/>
            <person name="Delisle I."/>
            <person name="Stirling I."/>
            <person name="Siniff D.B."/>
            <person name="Strobeck C."/>
        </authorList>
    </citation>
    <scope>NUCLEOTIDE SEQUENCE [GENOMIC DNA]</scope>
</reference>
<reference key="2">
    <citation type="journal article" date="2006" name="Mol. Phylogenet. Evol.">
        <title>Pinniped phylogeny and a new hypothesis for their origin and dispersal.</title>
        <authorList>
            <person name="Arnason U."/>
            <person name="Gullberg A."/>
            <person name="Janke A."/>
            <person name="Kullberg M."/>
            <person name="Lehman N."/>
            <person name="Petrov E.A."/>
            <person name="Vainola R."/>
        </authorList>
    </citation>
    <scope>NUCLEOTIDE SEQUENCE [GENOMIC DNA]</scope>
</reference>
<reference key="3">
    <citation type="submission" date="2005-12" db="EMBL/GenBank/DDBJ databases">
        <title>Analysis of mitochondrial DNA sequences of spotted seals (Phoca largha) in Liaodong gulf.</title>
        <authorList>
            <person name="He C."/>
            <person name="Wang Q."/>
            <person name="Han J."/>
            <person name="Ma Z."/>
        </authorList>
    </citation>
    <scope>NUCLEOTIDE SEQUENCE [GENOMIC DNA]</scope>
    <source>
        <strain>Isolate LG 1</strain>
        <strain>Isolate LG 2</strain>
    </source>
</reference>